<proteinExistence type="evidence at protein level"/>
<comment type="subcellular location">
    <subcellularLocation>
        <location evidence="1">Cell membrane</location>
        <topology evidence="1">Peripheral membrane protein</topology>
        <orientation evidence="1">Cytoplasmic side</orientation>
    </subcellularLocation>
</comment>
<comment type="domain">
    <text evidence="1">The HXXXXD motif is essential for acyltransferase activity and may constitute the binding site for the phosphate moiety of the glycerol-3-phosphate.</text>
</comment>
<comment type="miscellaneous">
    <text>Was identified as a high-confidence drug target.</text>
</comment>
<comment type="similarity">
    <text evidence="2">Belongs to the GPAT/DAPAT family.</text>
</comment>
<evidence type="ECO:0000250" key="1"/>
<evidence type="ECO:0000305" key="2"/>
<reference key="1">
    <citation type="journal article" date="1998" name="Nature">
        <title>Deciphering the biology of Mycobacterium tuberculosis from the complete genome sequence.</title>
        <authorList>
            <person name="Cole S.T."/>
            <person name="Brosch R."/>
            <person name="Parkhill J."/>
            <person name="Garnier T."/>
            <person name="Churcher C.M."/>
            <person name="Harris D.E."/>
            <person name="Gordon S.V."/>
            <person name="Eiglmeier K."/>
            <person name="Gas S."/>
            <person name="Barry C.E. III"/>
            <person name="Tekaia F."/>
            <person name="Badcock K."/>
            <person name="Basham D."/>
            <person name="Brown D."/>
            <person name="Chillingworth T."/>
            <person name="Connor R."/>
            <person name="Davies R.M."/>
            <person name="Devlin K."/>
            <person name="Feltwell T."/>
            <person name="Gentles S."/>
            <person name="Hamlin N."/>
            <person name="Holroyd S."/>
            <person name="Hornsby T."/>
            <person name="Jagels K."/>
            <person name="Krogh A."/>
            <person name="McLean J."/>
            <person name="Moule S."/>
            <person name="Murphy L.D."/>
            <person name="Oliver S."/>
            <person name="Osborne J."/>
            <person name="Quail M.A."/>
            <person name="Rajandream M.A."/>
            <person name="Rogers J."/>
            <person name="Rutter S."/>
            <person name="Seeger K."/>
            <person name="Skelton S."/>
            <person name="Squares S."/>
            <person name="Squares R."/>
            <person name="Sulston J.E."/>
            <person name="Taylor K."/>
            <person name="Whitehead S."/>
            <person name="Barrell B.G."/>
        </authorList>
    </citation>
    <scope>NUCLEOTIDE SEQUENCE [LARGE SCALE GENOMIC DNA]</scope>
    <source>
        <strain>ATCC 25618 / H37Rv</strain>
    </source>
</reference>
<reference key="2">
    <citation type="journal article" date="2008" name="BMC Syst. Biol.">
        <title>targetTB: a target identification pipeline for Mycobacterium tuberculosis through an interactome, reactome and genome-scale structural analysis.</title>
        <authorList>
            <person name="Raman K."/>
            <person name="Yeturu K."/>
            <person name="Chandra N."/>
        </authorList>
    </citation>
    <scope>IDENTIFICATION AS A DRUG TARGET [LARGE SCALE ANALYSIS]</scope>
</reference>
<reference key="3">
    <citation type="journal article" date="2011" name="Mol. Cell. Proteomics">
        <title>Proteogenomic analysis of Mycobacterium tuberculosis by high resolution mass spectrometry.</title>
        <authorList>
            <person name="Kelkar D.S."/>
            <person name="Kumar D."/>
            <person name="Kumar P."/>
            <person name="Balakrishnan L."/>
            <person name="Muthusamy B."/>
            <person name="Yadav A.K."/>
            <person name="Shrivastava P."/>
            <person name="Marimuthu A."/>
            <person name="Anand S."/>
            <person name="Sundaram H."/>
            <person name="Kingsbury R."/>
            <person name="Harsha H.C."/>
            <person name="Nair B."/>
            <person name="Prasad T.S."/>
            <person name="Chauhan D.S."/>
            <person name="Katoch K."/>
            <person name="Katoch V.M."/>
            <person name="Kumar P."/>
            <person name="Chaerkady R."/>
            <person name="Ramachandran S."/>
            <person name="Dash D."/>
            <person name="Pandey A."/>
        </authorList>
    </citation>
    <scope>IDENTIFICATION BY MASS SPECTROMETRY [LARGE SCALE ANALYSIS]</scope>
    <source>
        <strain>ATCC 25618 / H37Rv</strain>
    </source>
</reference>
<keyword id="KW-0012">Acyltransferase</keyword>
<keyword id="KW-1003">Cell membrane</keyword>
<keyword id="KW-0472">Membrane</keyword>
<keyword id="KW-1185">Reference proteome</keyword>
<keyword id="KW-0808">Transferase</keyword>
<protein>
    <recommendedName>
        <fullName>Putative acyltransferase plsB1</fullName>
    </recommendedName>
</protein>
<feature type="chain" id="PRO_0000195244" description="Putative acyltransferase plsB1">
    <location>
        <begin position="1"/>
        <end position="621"/>
    </location>
</feature>
<feature type="short sequence motif" description="HXXXXD motif">
    <location>
        <begin position="123"/>
        <end position="128"/>
    </location>
</feature>
<organism>
    <name type="scientific">Mycobacterium tuberculosis (strain ATCC 25618 / H37Rv)</name>
    <dbReference type="NCBI Taxonomy" id="83332"/>
    <lineage>
        <taxon>Bacteria</taxon>
        <taxon>Bacillati</taxon>
        <taxon>Actinomycetota</taxon>
        <taxon>Actinomycetes</taxon>
        <taxon>Mycobacteriales</taxon>
        <taxon>Mycobacteriaceae</taxon>
        <taxon>Mycobacterium</taxon>
        <taxon>Mycobacterium tuberculosis complex</taxon>
    </lineage>
</organism>
<sequence>MTAREVGRIGLRKLLQRIGIVAESMTPLATDPVEVTQLLDARWYDERLRALADELGRDPDSVRAEAAGYLREMAASLDERAVQAWRGFSRWLMRAYDVLVDEDQITQLRKLDRKATLAFAFSHRSYLDGMLLPEAILANRLSPALTFGGANLNFFPMGAWAKRTGAIFIRRQTKDIPVYRFVLRAYAAQLVQNHVNLTWSIEGGRTRTGKLRPPVFGILRYITDAVDEIDGPEVYLVPTSIVYDQLHEVEAMTTEAYGAVKRPEDLRFLVRLARQQGERLGRAYLDFGEPLPLRKRLQEMRADKSGTGSEIERIALDVEHRINRATPVTPTAVVSLALLGADRSLSISEVLATVRPLASYIAARNWAVAGAADLTNRSTIRWTLHQMVASGVVSVYDAGTEAVWGIGEDQHLVAAFYRNTAIHILVDRAVAELALLAAAETTTNGSVSPATVRDEALSLRDLLKFEFLFSGRAQFEKDLANEVLLIGSVVDTSKPAAAADVWRLLESADVLLAHLVLRPFLDAYHIVADRLAAHEDDSFDEEGFLAECLQVGKQWELQRNIASAESRSMELFKTALRLARHRELVDGADATDIAKRRQQFADEIATATRRVNTIAELARRQ</sequence>
<dbReference type="EMBL" id="AL123456">
    <property type="protein sequence ID" value="CCP44315.1"/>
    <property type="molecule type" value="Genomic_DNA"/>
</dbReference>
<dbReference type="PIR" id="D70762">
    <property type="entry name" value="D70762"/>
</dbReference>
<dbReference type="RefSeq" id="NP_216067.1">
    <property type="nucleotide sequence ID" value="NC_000962.3"/>
</dbReference>
<dbReference type="RefSeq" id="WP_003407762.1">
    <property type="nucleotide sequence ID" value="NZ_NVQJ01000004.1"/>
</dbReference>
<dbReference type="SMR" id="P9WI59"/>
<dbReference type="FunCoup" id="P9WI59">
    <property type="interactions" value="262"/>
</dbReference>
<dbReference type="STRING" id="83332.Rv1551"/>
<dbReference type="PaxDb" id="83332-Rv1551"/>
<dbReference type="DNASU" id="886382"/>
<dbReference type="GeneID" id="886382"/>
<dbReference type="KEGG" id="mtu:Rv1551"/>
<dbReference type="KEGG" id="mtv:RVBD_1551"/>
<dbReference type="TubercuList" id="Rv1551"/>
<dbReference type="eggNOG" id="COG2937">
    <property type="taxonomic scope" value="Bacteria"/>
</dbReference>
<dbReference type="InParanoid" id="P9WI59"/>
<dbReference type="OrthoDB" id="335193at2"/>
<dbReference type="PhylomeDB" id="P9WI59"/>
<dbReference type="BRENDA" id="2.3.1.15">
    <property type="organism ID" value="3445"/>
</dbReference>
<dbReference type="Proteomes" id="UP000001584">
    <property type="component" value="Chromosome"/>
</dbReference>
<dbReference type="GO" id="GO:0009274">
    <property type="term" value="C:peptidoglycan-based cell wall"/>
    <property type="evidence" value="ECO:0007005"/>
    <property type="project" value="MTBBASE"/>
</dbReference>
<dbReference type="GO" id="GO:0005886">
    <property type="term" value="C:plasma membrane"/>
    <property type="evidence" value="ECO:0007005"/>
    <property type="project" value="MTBBASE"/>
</dbReference>
<dbReference type="GO" id="GO:0004366">
    <property type="term" value="F:glycerol-3-phosphate O-acyltransferase activity"/>
    <property type="evidence" value="ECO:0007669"/>
    <property type="project" value="InterPro"/>
</dbReference>
<dbReference type="GO" id="GO:0008654">
    <property type="term" value="P:phospholipid biosynthetic process"/>
    <property type="evidence" value="ECO:0007669"/>
    <property type="project" value="InterPro"/>
</dbReference>
<dbReference type="CDD" id="cd07993">
    <property type="entry name" value="LPLAT_DHAPAT-like"/>
    <property type="match status" value="1"/>
</dbReference>
<dbReference type="InterPro" id="IPR022284">
    <property type="entry name" value="GPAT/DHAPAT"/>
</dbReference>
<dbReference type="InterPro" id="IPR045520">
    <property type="entry name" value="GPAT/DHAPAT_C"/>
</dbReference>
<dbReference type="InterPro" id="IPR041728">
    <property type="entry name" value="GPAT/DHAPAT_LPLAT"/>
</dbReference>
<dbReference type="InterPro" id="IPR028354">
    <property type="entry name" value="GPAT_PlsB"/>
</dbReference>
<dbReference type="InterPro" id="IPR002123">
    <property type="entry name" value="Plipid/glycerol_acylTrfase"/>
</dbReference>
<dbReference type="NCBIfam" id="NF008883">
    <property type="entry name" value="PRK11915.1"/>
    <property type="match status" value="1"/>
</dbReference>
<dbReference type="PANTHER" id="PTHR12563:SF17">
    <property type="entry name" value="DIHYDROXYACETONE PHOSPHATE ACYLTRANSFERASE"/>
    <property type="match status" value="1"/>
</dbReference>
<dbReference type="PANTHER" id="PTHR12563">
    <property type="entry name" value="GLYCEROL-3-PHOSPHATE ACYLTRANSFERASE"/>
    <property type="match status" value="1"/>
</dbReference>
<dbReference type="Pfam" id="PF01553">
    <property type="entry name" value="Acyltransferase"/>
    <property type="match status" value="1"/>
</dbReference>
<dbReference type="Pfam" id="PF19277">
    <property type="entry name" value="GPAT_C"/>
    <property type="match status" value="1"/>
</dbReference>
<dbReference type="PIRSF" id="PIRSF500064">
    <property type="entry name" value="GPAT"/>
    <property type="match status" value="1"/>
</dbReference>
<dbReference type="PIRSF" id="PIRSF000437">
    <property type="entry name" value="GPAT_DHAPAT"/>
    <property type="match status" value="1"/>
</dbReference>
<dbReference type="SMART" id="SM00563">
    <property type="entry name" value="PlsC"/>
    <property type="match status" value="1"/>
</dbReference>
<dbReference type="SUPFAM" id="SSF69593">
    <property type="entry name" value="Glycerol-3-phosphate (1)-acyltransferase"/>
    <property type="match status" value="1"/>
</dbReference>
<name>PLSB1_MYCTU</name>
<gene>
    <name type="primary">plsB1</name>
    <name type="ordered locus">Rv1551</name>
    <name type="ORF">MTCY48.14c</name>
</gene>
<accession>P9WI59</accession>
<accession>L0T8L2</accession>
<accession>P65734</accession>
<accession>Q10775</accession>